<keyword id="KW-1185">Reference proteome</keyword>
<keyword id="KW-0687">Ribonucleoprotein</keyword>
<keyword id="KW-0689">Ribosomal protein</keyword>
<keyword id="KW-0694">RNA-binding</keyword>
<keyword id="KW-0699">rRNA-binding</keyword>
<name>RL14_DESAH</name>
<accession>C0Q9W3</accession>
<protein>
    <recommendedName>
        <fullName evidence="1">Large ribosomal subunit protein uL14</fullName>
    </recommendedName>
    <alternativeName>
        <fullName evidence="2">50S ribosomal protein L14</fullName>
    </alternativeName>
</protein>
<evidence type="ECO:0000255" key="1">
    <source>
        <dbReference type="HAMAP-Rule" id="MF_01367"/>
    </source>
</evidence>
<evidence type="ECO:0000305" key="2"/>
<gene>
    <name evidence="1" type="primary">rplN</name>
    <name type="ordered locus">HRM2_36160</name>
</gene>
<reference key="1">
    <citation type="journal article" date="2009" name="Environ. Microbiol.">
        <title>Genome sequence of Desulfobacterium autotrophicum HRM2, a marine sulfate reducer oxidizing organic carbon completely to carbon dioxide.</title>
        <authorList>
            <person name="Strittmatter A.W."/>
            <person name="Liesegang H."/>
            <person name="Rabus R."/>
            <person name="Decker I."/>
            <person name="Amann J."/>
            <person name="Andres S."/>
            <person name="Henne A."/>
            <person name="Fricke W.F."/>
            <person name="Martinez-Arias R."/>
            <person name="Bartels D."/>
            <person name="Goesmann A."/>
            <person name="Krause L."/>
            <person name="Puehler A."/>
            <person name="Klenk H.P."/>
            <person name="Richter M."/>
            <person name="Schuler M."/>
            <person name="Gloeckner F.O."/>
            <person name="Meyerdierks A."/>
            <person name="Gottschalk G."/>
            <person name="Amann R."/>
        </authorList>
    </citation>
    <scope>NUCLEOTIDE SEQUENCE [LARGE SCALE GENOMIC DNA]</scope>
    <source>
        <strain>ATCC 43914 / DSM 3382 / VKM B-1955 / HRM2</strain>
    </source>
</reference>
<comment type="function">
    <text evidence="1">Binds to 23S rRNA. Forms part of two intersubunit bridges in the 70S ribosome.</text>
</comment>
<comment type="subunit">
    <text evidence="1">Part of the 50S ribosomal subunit. Forms a cluster with proteins L3 and L19. In the 70S ribosome, L14 and L19 interact and together make contacts with the 16S rRNA in bridges B5 and B8.</text>
</comment>
<comment type="similarity">
    <text evidence="1">Belongs to the universal ribosomal protein uL14 family.</text>
</comment>
<sequence>MIQTETRLTVADNSGAKELYCIKVLGGSKRRYAGIGDVIVVSVKEAIPNAKVKKGDVVKAVIVRTKKEVSRPDGSMIRFDDNSAVIINASNEPIGTRIFGPVARELRAKRFMKIISLAPEVL</sequence>
<dbReference type="EMBL" id="CP001087">
    <property type="protein sequence ID" value="ACN16681.1"/>
    <property type="molecule type" value="Genomic_DNA"/>
</dbReference>
<dbReference type="RefSeq" id="WP_015905431.1">
    <property type="nucleotide sequence ID" value="NC_012108.1"/>
</dbReference>
<dbReference type="SMR" id="C0Q9W3"/>
<dbReference type="STRING" id="177437.HRM2_36160"/>
<dbReference type="KEGG" id="dat:HRM2_36160"/>
<dbReference type="eggNOG" id="COG0093">
    <property type="taxonomic scope" value="Bacteria"/>
</dbReference>
<dbReference type="HOGENOM" id="CLU_095071_2_1_7"/>
<dbReference type="OrthoDB" id="9806379at2"/>
<dbReference type="Proteomes" id="UP000000442">
    <property type="component" value="Chromosome"/>
</dbReference>
<dbReference type="GO" id="GO:0022625">
    <property type="term" value="C:cytosolic large ribosomal subunit"/>
    <property type="evidence" value="ECO:0007669"/>
    <property type="project" value="TreeGrafter"/>
</dbReference>
<dbReference type="GO" id="GO:0070180">
    <property type="term" value="F:large ribosomal subunit rRNA binding"/>
    <property type="evidence" value="ECO:0007669"/>
    <property type="project" value="TreeGrafter"/>
</dbReference>
<dbReference type="GO" id="GO:0003735">
    <property type="term" value="F:structural constituent of ribosome"/>
    <property type="evidence" value="ECO:0007669"/>
    <property type="project" value="InterPro"/>
</dbReference>
<dbReference type="GO" id="GO:0006412">
    <property type="term" value="P:translation"/>
    <property type="evidence" value="ECO:0007669"/>
    <property type="project" value="UniProtKB-UniRule"/>
</dbReference>
<dbReference type="CDD" id="cd00337">
    <property type="entry name" value="Ribosomal_uL14"/>
    <property type="match status" value="1"/>
</dbReference>
<dbReference type="FunFam" id="2.40.150.20:FF:000001">
    <property type="entry name" value="50S ribosomal protein L14"/>
    <property type="match status" value="1"/>
</dbReference>
<dbReference type="Gene3D" id="2.40.150.20">
    <property type="entry name" value="Ribosomal protein L14"/>
    <property type="match status" value="1"/>
</dbReference>
<dbReference type="HAMAP" id="MF_01367">
    <property type="entry name" value="Ribosomal_uL14"/>
    <property type="match status" value="1"/>
</dbReference>
<dbReference type="InterPro" id="IPR000218">
    <property type="entry name" value="Ribosomal_uL14"/>
</dbReference>
<dbReference type="InterPro" id="IPR005745">
    <property type="entry name" value="Ribosomal_uL14_bac-type"/>
</dbReference>
<dbReference type="InterPro" id="IPR019972">
    <property type="entry name" value="Ribosomal_uL14_CS"/>
</dbReference>
<dbReference type="InterPro" id="IPR036853">
    <property type="entry name" value="Ribosomal_uL14_sf"/>
</dbReference>
<dbReference type="NCBIfam" id="TIGR01067">
    <property type="entry name" value="rplN_bact"/>
    <property type="match status" value="1"/>
</dbReference>
<dbReference type="PANTHER" id="PTHR11761">
    <property type="entry name" value="50S/60S RIBOSOMAL PROTEIN L14/L23"/>
    <property type="match status" value="1"/>
</dbReference>
<dbReference type="PANTHER" id="PTHR11761:SF3">
    <property type="entry name" value="LARGE RIBOSOMAL SUBUNIT PROTEIN UL14M"/>
    <property type="match status" value="1"/>
</dbReference>
<dbReference type="Pfam" id="PF00238">
    <property type="entry name" value="Ribosomal_L14"/>
    <property type="match status" value="1"/>
</dbReference>
<dbReference type="SMART" id="SM01374">
    <property type="entry name" value="Ribosomal_L14"/>
    <property type="match status" value="1"/>
</dbReference>
<dbReference type="SUPFAM" id="SSF50193">
    <property type="entry name" value="Ribosomal protein L14"/>
    <property type="match status" value="1"/>
</dbReference>
<dbReference type="PROSITE" id="PS00049">
    <property type="entry name" value="RIBOSOMAL_L14"/>
    <property type="match status" value="1"/>
</dbReference>
<proteinExistence type="inferred from homology"/>
<organism>
    <name type="scientific">Desulforapulum autotrophicum (strain ATCC 43914 / DSM 3382 / VKM B-1955 / HRM2)</name>
    <name type="common">Desulfobacterium autotrophicum</name>
    <dbReference type="NCBI Taxonomy" id="177437"/>
    <lineage>
        <taxon>Bacteria</taxon>
        <taxon>Pseudomonadati</taxon>
        <taxon>Thermodesulfobacteriota</taxon>
        <taxon>Desulfobacteria</taxon>
        <taxon>Desulfobacterales</taxon>
        <taxon>Desulfobacteraceae</taxon>
        <taxon>Desulforapulum</taxon>
    </lineage>
</organism>
<feature type="chain" id="PRO_1000214973" description="Large ribosomal subunit protein uL14">
    <location>
        <begin position="1"/>
        <end position="122"/>
    </location>
</feature>